<keyword id="KW-0998">Cell outer membrane</keyword>
<keyword id="KW-0472">Membrane</keyword>
<keyword id="KW-1185">Reference proteome</keyword>
<keyword id="KW-0732">Signal</keyword>
<keyword id="KW-0812">Transmembrane</keyword>
<keyword id="KW-1134">Transmembrane beta strand</keyword>
<accession>P44087</accession>
<comment type="function">
    <text evidence="1">Required for correct export to the cell surface of some cell outer membrane lipoproteins.</text>
</comment>
<comment type="subcellular location">
    <subcellularLocation>
        <location evidence="1">Cell outer membrane</location>
        <topology evidence="3">Multi-pass membrane protein</topology>
    </subcellularLocation>
</comment>
<comment type="domain">
    <text evidence="2">Consists of a soluble N-terminal domain and C-terminal probable beta-barrel in the outer membrane with 14 predicted beta-strands.</text>
</comment>
<comment type="similarity">
    <text evidence="4">Belongs to the Slam family.</text>
</comment>
<comment type="sequence caution" evidence="4">
    <conflict type="erroneous termination">
        <sequence resource="EMBL-CDS" id="AAC22642"/>
    </conflict>
    <text>Truncated C-terminus.</text>
</comment>
<protein>
    <recommendedName>
        <fullName>Surface lipoprotein assembly modifier 1</fullName>
        <shortName>Slam</shortName>
    </recommendedName>
</protein>
<reference key="1">
    <citation type="journal article" date="1995" name="Science">
        <title>Whole-genome random sequencing and assembly of Haemophilus influenzae Rd.</title>
        <authorList>
            <person name="Fleischmann R.D."/>
            <person name="Adams M.D."/>
            <person name="White O."/>
            <person name="Clayton R.A."/>
            <person name="Kirkness E.F."/>
            <person name="Kerlavage A.R."/>
            <person name="Bult C.J."/>
            <person name="Tomb J.-F."/>
            <person name="Dougherty B.A."/>
            <person name="Merrick J.M."/>
            <person name="McKenney K."/>
            <person name="Sutton G.G."/>
            <person name="FitzHugh W."/>
            <person name="Fields C.A."/>
            <person name="Gocayne J.D."/>
            <person name="Scott J.D."/>
            <person name="Shirley R."/>
            <person name="Liu L.-I."/>
            <person name="Glodek A."/>
            <person name="Kelley J.M."/>
            <person name="Weidman J.F."/>
            <person name="Phillips C.A."/>
            <person name="Spriggs T."/>
            <person name="Hedblom E."/>
            <person name="Cotton M.D."/>
            <person name="Utterback T.R."/>
            <person name="Hanna M.C."/>
            <person name="Nguyen D.T."/>
            <person name="Saudek D.M."/>
            <person name="Brandon R.C."/>
            <person name="Fine L.D."/>
            <person name="Fritchman J.L."/>
            <person name="Fuhrmann J.L."/>
            <person name="Geoghagen N.S.M."/>
            <person name="Gnehm C.L."/>
            <person name="McDonald L.A."/>
            <person name="Small K.V."/>
            <person name="Fraser C.M."/>
            <person name="Smith H.O."/>
            <person name="Venter J.C."/>
        </authorList>
    </citation>
    <scope>NUCLEOTIDE SEQUENCE [LARGE SCALE GENOMIC DNA]</scope>
    <source>
        <strain>ATCC 51907 / DSM 11121 / KW20 / Rd</strain>
    </source>
</reference>
<dbReference type="EMBL" id="L42023">
    <property type="protein sequence ID" value="AAC22642.1"/>
    <property type="status" value="ALT_SEQ"/>
    <property type="molecule type" value="Genomic_DNA"/>
</dbReference>
<dbReference type="PIR" id="F64017">
    <property type="entry name" value="F64017"/>
</dbReference>
<dbReference type="STRING" id="71421.HI_0974"/>
<dbReference type="EnsemblBacteria" id="AAC22642">
    <property type="protein sequence ID" value="AAC22642"/>
    <property type="gene ID" value="HI_0974"/>
</dbReference>
<dbReference type="KEGG" id="hin:HI_0974"/>
<dbReference type="eggNOG" id="COG4783">
    <property type="taxonomic scope" value="Bacteria"/>
</dbReference>
<dbReference type="HOGENOM" id="CLU_034927_1_0_6"/>
<dbReference type="Proteomes" id="UP000000579">
    <property type="component" value="Chromosome"/>
</dbReference>
<dbReference type="GO" id="GO:0009279">
    <property type="term" value="C:cell outer membrane"/>
    <property type="evidence" value="ECO:0007669"/>
    <property type="project" value="UniProtKB-SubCell"/>
</dbReference>
<dbReference type="InterPro" id="IPR007655">
    <property type="entry name" value="Slam_C_b-barrel"/>
</dbReference>
<dbReference type="Pfam" id="PF04575">
    <property type="entry name" value="SlipAM"/>
    <property type="match status" value="1"/>
</dbReference>
<dbReference type="Pfam" id="PF24575">
    <property type="entry name" value="TPR_Slam"/>
    <property type="match status" value="1"/>
</dbReference>
<organism>
    <name type="scientific">Haemophilus influenzae (strain ATCC 51907 / DSM 11121 / KW20 / Rd)</name>
    <dbReference type="NCBI Taxonomy" id="71421"/>
    <lineage>
        <taxon>Bacteria</taxon>
        <taxon>Pseudomonadati</taxon>
        <taxon>Pseudomonadota</taxon>
        <taxon>Gammaproteobacteria</taxon>
        <taxon>Pasteurellales</taxon>
        <taxon>Pasteurellaceae</taxon>
        <taxon>Haemophilus</taxon>
    </lineage>
</organism>
<name>SLAM1_HAEIN</name>
<feature type="signal peptide" evidence="3">
    <location>
        <begin position="1"/>
        <end position="23"/>
    </location>
</feature>
<feature type="chain" id="PRO_0000077985" description="Surface lipoprotein assembly modifier 1">
    <location>
        <begin position="24"/>
        <end position="481"/>
    </location>
</feature>
<feature type="transmembrane region" description="Beta stranded" evidence="3">
    <location>
        <begin position="194"/>
        <end position="204"/>
    </location>
</feature>
<feature type="transmembrane region" description="Beta stranded" evidence="3">
    <location>
        <begin position="233"/>
        <end position="243"/>
    </location>
</feature>
<feature type="transmembrane region" description="Beta stranded" evidence="3">
    <location>
        <begin position="248"/>
        <end position="258"/>
    </location>
</feature>
<feature type="transmembrane region" description="Beta stranded" evidence="3">
    <location>
        <begin position="271"/>
        <end position="281"/>
    </location>
</feature>
<feature type="transmembrane region" description="Beta stranded" evidence="3">
    <location>
        <begin position="285"/>
        <end position="295"/>
    </location>
</feature>
<feature type="transmembrane region" description="Beta stranded" evidence="3">
    <location>
        <begin position="315"/>
        <end position="325"/>
    </location>
</feature>
<feature type="transmembrane region" description="Beta stranded" evidence="3">
    <location>
        <begin position="329"/>
        <end position="338"/>
    </location>
</feature>
<feature type="transmembrane region" description="Beta stranded" evidence="3">
    <location>
        <begin position="353"/>
        <end position="363"/>
    </location>
</feature>
<feature type="transmembrane region" description="Beta stranded" evidence="3">
    <location>
        <begin position="368"/>
        <end position="377"/>
    </location>
</feature>
<feature type="transmembrane region" description="Beta stranded" evidence="3">
    <location>
        <begin position="390"/>
        <end position="400"/>
    </location>
</feature>
<feature type="transmembrane region" description="Beta stranded" evidence="3">
    <location>
        <begin position="405"/>
        <end position="414"/>
    </location>
</feature>
<feature type="transmembrane region" description="Beta stranded" evidence="3">
    <location>
        <begin position="432"/>
        <end position="441"/>
    </location>
</feature>
<feature type="transmembrane region" description="Beta stranded" evidence="3">
    <location>
        <begin position="448"/>
        <end position="458"/>
    </location>
</feature>
<feature type="transmembrane region" description="Beta stranded" evidence="3">
    <location>
        <begin position="471"/>
        <end position="481"/>
    </location>
</feature>
<feature type="region of interest" description="N-terminal domain" evidence="2">
    <location>
        <begin position="25"/>
        <end position="192"/>
    </location>
</feature>
<feature type="region of interest" description="C-terminal probable beta barrel" evidence="2">
    <location>
        <begin position="193"/>
        <end position="481"/>
    </location>
</feature>
<proteinExistence type="inferred from homology"/>
<sequence>MSIQTKFILFLSSSLFLTPYSVATEKSPQPHDGRLDEQLHLAKPNLPQKTPALLTNNNPSKLSITKEELAKHPDLIIRGLIPAVLQNNGEAVQLLLPLYQPLPKKDPFLLEWAEAIDLREKGYFSDSVKAYRHLFSQKTDLLPLRYQLAQALFLNNDNEAAKDQFQKLRAEQVSSDSVKIIEQYLSALNQRDQWKIQGGFSFLNESNINNAPKAGTKIGNWTAWEKESARGFSYFGNAEKKWSLPHNHFTKLSLEGSGKYYWDNKKYNEFNARAGVGLGYQTARFELSLMPFTEKRWYAGGSSGGNAMKQYSKNSGARLDLSNWLNEKWQISTALEYGEQRYETRKHLNGNNYLASATLLYLAKSGQYWFGGADYNRENTRDLDNAYQRKNVRLGWGQEWKAGISTRLILNYARRAYKEKDLIGIRQKNKEYASVLTIWHRNFHIWGITPKLSWSYQKVTSNHPFYEYDKNRIYVEISKTF</sequence>
<evidence type="ECO:0000250" key="1">
    <source>
        <dbReference type="UniProtKB" id="Q4QLR4"/>
    </source>
</evidence>
<evidence type="ECO:0000250" key="2">
    <source>
        <dbReference type="UniProtKB" id="Q9K165"/>
    </source>
</evidence>
<evidence type="ECO:0000255" key="3"/>
<evidence type="ECO:0000305" key="4"/>
<gene>
    <name type="ordered locus">HI_0974</name>
</gene>